<evidence type="ECO:0000255" key="1">
    <source>
        <dbReference type="HAMAP-Rule" id="MF_00605"/>
    </source>
</evidence>
<organism>
    <name type="scientific">Bacillus cereus (strain ATCC 10987 / NRS 248)</name>
    <dbReference type="NCBI Taxonomy" id="222523"/>
    <lineage>
        <taxon>Bacteria</taxon>
        <taxon>Bacillati</taxon>
        <taxon>Bacillota</taxon>
        <taxon>Bacilli</taxon>
        <taxon>Bacillales</taxon>
        <taxon>Bacillaceae</taxon>
        <taxon>Bacillus</taxon>
        <taxon>Bacillus cereus group</taxon>
    </lineage>
</organism>
<keyword id="KW-0963">Cytoplasm</keyword>
<keyword id="KW-0489">Methyltransferase</keyword>
<keyword id="KW-0949">S-adenosyl-L-methionine</keyword>
<keyword id="KW-0808">Transferase</keyword>
<keyword id="KW-0819">tRNA processing</keyword>
<sequence>MKIDILTLFPDMFTGVFGSSILKKAQEKEAVELRVVNFRDYTTSKHNSVDDYPYGGGAGMVLTPQPIFDAVEDLTKETERKPRVVLMCPQGERFTQKKAEELAEEEHLIFVCGHYEGYDERIREHLVTDEISIGDYVLTGGELASMVITDSVVRLLPGVLGNHASQVEDSFSTGLLEHPHYTRPADFRGMKVPDVLMSGNHKNIDEWRHKESLRRTYTRRPDLLEERELSKQEKKWLEQIKEGK</sequence>
<reference key="1">
    <citation type="journal article" date="2004" name="Nucleic Acids Res.">
        <title>The genome sequence of Bacillus cereus ATCC 10987 reveals metabolic adaptations and a large plasmid related to Bacillus anthracis pXO1.</title>
        <authorList>
            <person name="Rasko D.A."/>
            <person name="Ravel J."/>
            <person name="Oekstad O.A."/>
            <person name="Helgason E."/>
            <person name="Cer R.Z."/>
            <person name="Jiang L."/>
            <person name="Shores K.A."/>
            <person name="Fouts D.E."/>
            <person name="Tourasse N.J."/>
            <person name="Angiuoli S.V."/>
            <person name="Kolonay J.F."/>
            <person name="Nelson W.C."/>
            <person name="Kolstoe A.-B."/>
            <person name="Fraser C.M."/>
            <person name="Read T.D."/>
        </authorList>
    </citation>
    <scope>NUCLEOTIDE SEQUENCE [LARGE SCALE GENOMIC DNA]</scope>
    <source>
        <strain>ATCC 10987 / NRS 248</strain>
    </source>
</reference>
<accession>Q732M9</accession>
<protein>
    <recommendedName>
        <fullName evidence="1">tRNA (guanine-N(1)-)-methyltransferase</fullName>
        <ecNumber evidence="1">2.1.1.228</ecNumber>
    </recommendedName>
    <alternativeName>
        <fullName evidence="1">M1G-methyltransferase</fullName>
    </alternativeName>
    <alternativeName>
        <fullName evidence="1">tRNA [GM37] methyltransferase</fullName>
    </alternativeName>
</protein>
<proteinExistence type="inferred from homology"/>
<feature type="chain" id="PRO_0000060320" description="tRNA (guanine-N(1)-)-methyltransferase">
    <location>
        <begin position="1"/>
        <end position="244"/>
    </location>
</feature>
<feature type="binding site" evidence="1">
    <location>
        <position position="113"/>
    </location>
    <ligand>
        <name>S-adenosyl-L-methionine</name>
        <dbReference type="ChEBI" id="CHEBI:59789"/>
    </ligand>
</feature>
<feature type="binding site" evidence="1">
    <location>
        <begin position="133"/>
        <end position="138"/>
    </location>
    <ligand>
        <name>S-adenosyl-L-methionine</name>
        <dbReference type="ChEBI" id="CHEBI:59789"/>
    </ligand>
</feature>
<name>TRMD_BACC1</name>
<dbReference type="EC" id="2.1.1.228" evidence="1"/>
<dbReference type="EMBL" id="AE017194">
    <property type="protein sequence ID" value="AAS42788.1"/>
    <property type="molecule type" value="Genomic_DNA"/>
</dbReference>
<dbReference type="SMR" id="Q732M9"/>
<dbReference type="KEGG" id="bca:BCE_3883"/>
<dbReference type="HOGENOM" id="CLU_047363_0_1_9"/>
<dbReference type="Proteomes" id="UP000002527">
    <property type="component" value="Chromosome"/>
</dbReference>
<dbReference type="GO" id="GO:0005829">
    <property type="term" value="C:cytosol"/>
    <property type="evidence" value="ECO:0007669"/>
    <property type="project" value="TreeGrafter"/>
</dbReference>
<dbReference type="GO" id="GO:0052906">
    <property type="term" value="F:tRNA (guanine(37)-N1)-methyltransferase activity"/>
    <property type="evidence" value="ECO:0007669"/>
    <property type="project" value="UniProtKB-UniRule"/>
</dbReference>
<dbReference type="GO" id="GO:0002939">
    <property type="term" value="P:tRNA N1-guanine methylation"/>
    <property type="evidence" value="ECO:0007669"/>
    <property type="project" value="TreeGrafter"/>
</dbReference>
<dbReference type="CDD" id="cd18080">
    <property type="entry name" value="TrmD-like"/>
    <property type="match status" value="1"/>
</dbReference>
<dbReference type="FunFam" id="1.10.1270.20:FF:000001">
    <property type="entry name" value="tRNA (guanine-N(1)-)-methyltransferase"/>
    <property type="match status" value="1"/>
</dbReference>
<dbReference type="FunFam" id="3.40.1280.10:FF:000001">
    <property type="entry name" value="tRNA (guanine-N(1)-)-methyltransferase"/>
    <property type="match status" value="1"/>
</dbReference>
<dbReference type="Gene3D" id="3.40.1280.10">
    <property type="match status" value="1"/>
</dbReference>
<dbReference type="Gene3D" id="1.10.1270.20">
    <property type="entry name" value="tRNA(m1g37)methyltransferase, domain 2"/>
    <property type="match status" value="1"/>
</dbReference>
<dbReference type="HAMAP" id="MF_00605">
    <property type="entry name" value="TrmD"/>
    <property type="match status" value="1"/>
</dbReference>
<dbReference type="InterPro" id="IPR029028">
    <property type="entry name" value="Alpha/beta_knot_MTases"/>
</dbReference>
<dbReference type="InterPro" id="IPR023148">
    <property type="entry name" value="tRNA_m1G_MeTrfase_C_sf"/>
</dbReference>
<dbReference type="InterPro" id="IPR002649">
    <property type="entry name" value="tRNA_m1G_MeTrfase_TrmD"/>
</dbReference>
<dbReference type="InterPro" id="IPR029026">
    <property type="entry name" value="tRNA_m1G_MTases_N"/>
</dbReference>
<dbReference type="InterPro" id="IPR016009">
    <property type="entry name" value="tRNA_MeTrfase_TRMD/TRM10"/>
</dbReference>
<dbReference type="NCBIfam" id="NF000648">
    <property type="entry name" value="PRK00026.1"/>
    <property type="match status" value="1"/>
</dbReference>
<dbReference type="NCBIfam" id="TIGR00088">
    <property type="entry name" value="trmD"/>
    <property type="match status" value="1"/>
</dbReference>
<dbReference type="PANTHER" id="PTHR46417">
    <property type="entry name" value="TRNA (GUANINE-N(1)-)-METHYLTRANSFERASE"/>
    <property type="match status" value="1"/>
</dbReference>
<dbReference type="PANTHER" id="PTHR46417:SF1">
    <property type="entry name" value="TRNA (GUANINE-N(1)-)-METHYLTRANSFERASE"/>
    <property type="match status" value="1"/>
</dbReference>
<dbReference type="Pfam" id="PF01746">
    <property type="entry name" value="tRNA_m1G_MT"/>
    <property type="match status" value="1"/>
</dbReference>
<dbReference type="PIRSF" id="PIRSF000386">
    <property type="entry name" value="tRNA_mtase"/>
    <property type="match status" value="1"/>
</dbReference>
<dbReference type="SUPFAM" id="SSF75217">
    <property type="entry name" value="alpha/beta knot"/>
    <property type="match status" value="1"/>
</dbReference>
<gene>
    <name evidence="1" type="primary">trmD</name>
    <name type="ordered locus">BCE_3883</name>
</gene>
<comment type="function">
    <text evidence="1">Specifically methylates guanosine-37 in various tRNAs.</text>
</comment>
<comment type="catalytic activity">
    <reaction evidence="1">
        <text>guanosine(37) in tRNA + S-adenosyl-L-methionine = N(1)-methylguanosine(37) in tRNA + S-adenosyl-L-homocysteine + H(+)</text>
        <dbReference type="Rhea" id="RHEA:36899"/>
        <dbReference type="Rhea" id="RHEA-COMP:10145"/>
        <dbReference type="Rhea" id="RHEA-COMP:10147"/>
        <dbReference type="ChEBI" id="CHEBI:15378"/>
        <dbReference type="ChEBI" id="CHEBI:57856"/>
        <dbReference type="ChEBI" id="CHEBI:59789"/>
        <dbReference type="ChEBI" id="CHEBI:73542"/>
        <dbReference type="ChEBI" id="CHEBI:74269"/>
        <dbReference type="EC" id="2.1.1.228"/>
    </reaction>
</comment>
<comment type="subunit">
    <text evidence="1">Homodimer.</text>
</comment>
<comment type="subcellular location">
    <subcellularLocation>
        <location evidence="1">Cytoplasm</location>
    </subcellularLocation>
</comment>
<comment type="similarity">
    <text evidence="1">Belongs to the RNA methyltransferase TrmD family.</text>
</comment>